<reference key="1">
    <citation type="journal article" date="2009" name="PLoS Genet.">
        <title>The complete genome and proteome of Laribacter hongkongensis reveal potential mechanisms for adaptations to different temperatures and habitats.</title>
        <authorList>
            <person name="Woo P.C.Y."/>
            <person name="Lau S.K.P."/>
            <person name="Tse H."/>
            <person name="Teng J.L.L."/>
            <person name="Curreem S.O."/>
            <person name="Tsang A.K.L."/>
            <person name="Fan R.Y.Y."/>
            <person name="Wong G.K.M."/>
            <person name="Huang Y."/>
            <person name="Loman N.J."/>
            <person name="Snyder L.A.S."/>
            <person name="Cai J.J."/>
            <person name="Huang J.-D."/>
            <person name="Mak W."/>
            <person name="Pallen M.J."/>
            <person name="Lok S."/>
            <person name="Yuen K.-Y."/>
        </authorList>
    </citation>
    <scope>NUCLEOTIDE SEQUENCE [LARGE SCALE GENOMIC DNA]</scope>
    <source>
        <strain>HLHK9</strain>
    </source>
</reference>
<organism>
    <name type="scientific">Laribacter hongkongensis (strain HLHK9)</name>
    <dbReference type="NCBI Taxonomy" id="557598"/>
    <lineage>
        <taxon>Bacteria</taxon>
        <taxon>Pseudomonadati</taxon>
        <taxon>Pseudomonadota</taxon>
        <taxon>Betaproteobacteria</taxon>
        <taxon>Neisseriales</taxon>
        <taxon>Aquaspirillaceae</taxon>
        <taxon>Laribacter</taxon>
    </lineage>
</organism>
<evidence type="ECO:0000255" key="1">
    <source>
        <dbReference type="HAMAP-Rule" id="MF_00385"/>
    </source>
</evidence>
<evidence type="ECO:0000305" key="2"/>
<accession>C1DBF8</accession>
<protein>
    <recommendedName>
        <fullName evidence="1">Small ribosomal subunit protein bS16</fullName>
    </recommendedName>
    <alternativeName>
        <fullName evidence="2">30S ribosomal protein S16</fullName>
    </alternativeName>
</protein>
<feature type="chain" id="PRO_1000196425" description="Small ribosomal subunit protein bS16">
    <location>
        <begin position="1"/>
        <end position="80"/>
    </location>
</feature>
<dbReference type="EMBL" id="CP001154">
    <property type="protein sequence ID" value="ACO73355.1"/>
    <property type="molecule type" value="Genomic_DNA"/>
</dbReference>
<dbReference type="RefSeq" id="WP_012695849.1">
    <property type="nucleotide sequence ID" value="NC_012559.1"/>
</dbReference>
<dbReference type="SMR" id="C1DBF8"/>
<dbReference type="STRING" id="557598.LHK_00360"/>
<dbReference type="GeneID" id="75109419"/>
<dbReference type="KEGG" id="lhk:LHK_00360"/>
<dbReference type="eggNOG" id="COG0228">
    <property type="taxonomic scope" value="Bacteria"/>
</dbReference>
<dbReference type="HOGENOM" id="CLU_100590_5_1_4"/>
<dbReference type="Proteomes" id="UP000002010">
    <property type="component" value="Chromosome"/>
</dbReference>
<dbReference type="GO" id="GO:0005737">
    <property type="term" value="C:cytoplasm"/>
    <property type="evidence" value="ECO:0007669"/>
    <property type="project" value="UniProtKB-ARBA"/>
</dbReference>
<dbReference type="GO" id="GO:0015935">
    <property type="term" value="C:small ribosomal subunit"/>
    <property type="evidence" value="ECO:0007669"/>
    <property type="project" value="TreeGrafter"/>
</dbReference>
<dbReference type="GO" id="GO:0003735">
    <property type="term" value="F:structural constituent of ribosome"/>
    <property type="evidence" value="ECO:0007669"/>
    <property type="project" value="InterPro"/>
</dbReference>
<dbReference type="GO" id="GO:0006412">
    <property type="term" value="P:translation"/>
    <property type="evidence" value="ECO:0007669"/>
    <property type="project" value="UniProtKB-UniRule"/>
</dbReference>
<dbReference type="Gene3D" id="3.30.1320.10">
    <property type="match status" value="1"/>
</dbReference>
<dbReference type="HAMAP" id="MF_00385">
    <property type="entry name" value="Ribosomal_bS16"/>
    <property type="match status" value="1"/>
</dbReference>
<dbReference type="InterPro" id="IPR000307">
    <property type="entry name" value="Ribosomal_bS16"/>
</dbReference>
<dbReference type="InterPro" id="IPR020592">
    <property type="entry name" value="Ribosomal_bS16_CS"/>
</dbReference>
<dbReference type="InterPro" id="IPR023803">
    <property type="entry name" value="Ribosomal_bS16_dom_sf"/>
</dbReference>
<dbReference type="NCBIfam" id="TIGR00002">
    <property type="entry name" value="S16"/>
    <property type="match status" value="1"/>
</dbReference>
<dbReference type="PANTHER" id="PTHR12919">
    <property type="entry name" value="30S RIBOSOMAL PROTEIN S16"/>
    <property type="match status" value="1"/>
</dbReference>
<dbReference type="PANTHER" id="PTHR12919:SF20">
    <property type="entry name" value="SMALL RIBOSOMAL SUBUNIT PROTEIN BS16M"/>
    <property type="match status" value="1"/>
</dbReference>
<dbReference type="Pfam" id="PF00886">
    <property type="entry name" value="Ribosomal_S16"/>
    <property type="match status" value="1"/>
</dbReference>
<dbReference type="SUPFAM" id="SSF54565">
    <property type="entry name" value="Ribosomal protein S16"/>
    <property type="match status" value="1"/>
</dbReference>
<dbReference type="PROSITE" id="PS00732">
    <property type="entry name" value="RIBOSOMAL_S16"/>
    <property type="match status" value="1"/>
</dbReference>
<gene>
    <name evidence="1" type="primary">rpsP</name>
    <name type="ordered locus">LHK_00360</name>
</gene>
<proteinExistence type="inferred from homology"/>
<keyword id="KW-1185">Reference proteome</keyword>
<keyword id="KW-0687">Ribonucleoprotein</keyword>
<keyword id="KW-0689">Ribosomal protein</keyword>
<comment type="similarity">
    <text evidence="1">Belongs to the bacterial ribosomal protein bS16 family.</text>
</comment>
<sequence>MVVIRLARGGAKNRPFYNIVVTDSRNRRDGRFIERVGFYNPVAAEGSERIRLNSDRLAYWTGVGAQVSDAVAKLLKQQAA</sequence>
<name>RS16_LARHH</name>